<dbReference type="EMBL" id="Z28023">
    <property type="protein sequence ID" value="CAA81858.1"/>
    <property type="molecule type" value="Genomic_DNA"/>
</dbReference>
<dbReference type="EMBL" id="BK006944">
    <property type="protein sequence ID" value="DAA09132.2"/>
    <property type="molecule type" value="Genomic_DNA"/>
</dbReference>
<dbReference type="PIR" id="S37840">
    <property type="entry name" value="S37840"/>
</dbReference>
<dbReference type="SMR" id="P36103"/>
<dbReference type="BioGRID" id="34108">
    <property type="interactions" value="113"/>
</dbReference>
<dbReference type="DIP" id="DIP-1760N"/>
<dbReference type="FunCoup" id="P36103">
    <property type="interactions" value="34"/>
</dbReference>
<dbReference type="IntAct" id="P36103">
    <property type="interactions" value="8"/>
</dbReference>
<dbReference type="MINT" id="P36103"/>
<dbReference type="STRING" id="4932.YKL023W"/>
<dbReference type="iPTMnet" id="P36103"/>
<dbReference type="PaxDb" id="4932-YKL023W"/>
<dbReference type="PeptideAtlas" id="P36103"/>
<dbReference type="EnsemblFungi" id="YKL023W_mRNA">
    <property type="protein sequence ID" value="YKL023W"/>
    <property type="gene ID" value="YKL023W"/>
</dbReference>
<dbReference type="KEGG" id="sce:YKL023W"/>
<dbReference type="AGR" id="SGD:S000001506"/>
<dbReference type="SGD" id="S000001506">
    <property type="gene designation" value="YKL023W"/>
</dbReference>
<dbReference type="VEuPathDB" id="FungiDB:YKL023W"/>
<dbReference type="HOGENOM" id="CLU_1005284_0_0_1"/>
<dbReference type="InParanoid" id="P36103"/>
<dbReference type="OMA" id="DMSTHED"/>
<dbReference type="OrthoDB" id="4068865at2759"/>
<dbReference type="BioCyc" id="YEAST:G3O-31831-MONOMER"/>
<dbReference type="BioGRID-ORCS" id="853845">
    <property type="hits" value="1 hit in 10 CRISPR screens"/>
</dbReference>
<dbReference type="PRO" id="PR:P36103"/>
<dbReference type="Proteomes" id="UP000002311">
    <property type="component" value="Chromosome XI"/>
</dbReference>
<dbReference type="RNAct" id="P36103">
    <property type="molecule type" value="protein"/>
</dbReference>
<dbReference type="GO" id="GO:0005737">
    <property type="term" value="C:cytoplasm"/>
    <property type="evidence" value="ECO:0007005"/>
    <property type="project" value="SGD"/>
</dbReference>
<dbReference type="GO" id="GO:0000956">
    <property type="term" value="P:nuclear-transcribed mRNA catabolic process"/>
    <property type="evidence" value="ECO:0000315"/>
    <property type="project" value="SGD"/>
</dbReference>
<reference key="1">
    <citation type="journal article" date="1994" name="Nature">
        <title>Complete DNA sequence of yeast chromosome XI.</title>
        <authorList>
            <person name="Dujon B."/>
            <person name="Alexandraki D."/>
            <person name="Andre B."/>
            <person name="Ansorge W."/>
            <person name="Baladron V."/>
            <person name="Ballesta J.P.G."/>
            <person name="Banrevi A."/>
            <person name="Bolle P.-A."/>
            <person name="Bolotin-Fukuhara M."/>
            <person name="Bossier P."/>
            <person name="Bou G."/>
            <person name="Boyer J."/>
            <person name="Buitrago M.J."/>
            <person name="Cheret G."/>
            <person name="Colleaux L."/>
            <person name="Daignan-Fornier B."/>
            <person name="del Rey F."/>
            <person name="Dion C."/>
            <person name="Domdey H."/>
            <person name="Duesterhoeft A."/>
            <person name="Duesterhus S."/>
            <person name="Entian K.-D."/>
            <person name="Erfle H."/>
            <person name="Esteban P.F."/>
            <person name="Feldmann H."/>
            <person name="Fernandes L."/>
            <person name="Fobo G.M."/>
            <person name="Fritz C."/>
            <person name="Fukuhara H."/>
            <person name="Gabel C."/>
            <person name="Gaillon L."/>
            <person name="Garcia-Cantalejo J.M."/>
            <person name="Garcia-Ramirez J.J."/>
            <person name="Gent M.E."/>
            <person name="Ghazvini M."/>
            <person name="Goffeau A."/>
            <person name="Gonzalez A."/>
            <person name="Grothues D."/>
            <person name="Guerreiro P."/>
            <person name="Hegemann J.H."/>
            <person name="Hewitt N."/>
            <person name="Hilger F."/>
            <person name="Hollenberg C.P."/>
            <person name="Horaitis O."/>
            <person name="Indge K.J."/>
            <person name="Jacquier A."/>
            <person name="James C.M."/>
            <person name="Jauniaux J.-C."/>
            <person name="Jimenez A."/>
            <person name="Keuchel H."/>
            <person name="Kirchrath L."/>
            <person name="Kleine K."/>
            <person name="Koetter P."/>
            <person name="Legrain P."/>
            <person name="Liebl S."/>
            <person name="Louis E.J."/>
            <person name="Maia e Silva A."/>
            <person name="Marck C."/>
            <person name="Monnier A.-L."/>
            <person name="Moestl D."/>
            <person name="Mueller S."/>
            <person name="Obermaier B."/>
            <person name="Oliver S.G."/>
            <person name="Pallier C."/>
            <person name="Pascolo S."/>
            <person name="Pfeiffer F."/>
            <person name="Philippsen P."/>
            <person name="Planta R.J."/>
            <person name="Pohl F.M."/>
            <person name="Pohl T.M."/>
            <person name="Poehlmann R."/>
            <person name="Portetelle D."/>
            <person name="Purnelle B."/>
            <person name="Puzos V."/>
            <person name="Ramezani Rad M."/>
            <person name="Rasmussen S.W."/>
            <person name="Remacha M.A."/>
            <person name="Revuelta J.L."/>
            <person name="Richard G.-F."/>
            <person name="Rieger M."/>
            <person name="Rodrigues-Pousada C."/>
            <person name="Rose M."/>
            <person name="Rupp T."/>
            <person name="Santos M.A."/>
            <person name="Schwager C."/>
            <person name="Sensen C."/>
            <person name="Skala J."/>
            <person name="Soares H."/>
            <person name="Sor F."/>
            <person name="Stegemann J."/>
            <person name="Tettelin H."/>
            <person name="Thierry A."/>
            <person name="Tzermia M."/>
            <person name="Urrestarazu L.A."/>
            <person name="van Dyck L."/>
            <person name="van Vliet-Reedijk J.C."/>
            <person name="Valens M."/>
            <person name="Vandenbol M."/>
            <person name="Vilela C."/>
            <person name="Vissers S."/>
            <person name="von Wettstein D."/>
            <person name="Voss H."/>
            <person name="Wiemann S."/>
            <person name="Xu G."/>
            <person name="Zimmermann J."/>
            <person name="Haasemann M."/>
            <person name="Becker I."/>
            <person name="Mewes H.-W."/>
        </authorList>
    </citation>
    <scope>NUCLEOTIDE SEQUENCE [LARGE SCALE GENOMIC DNA]</scope>
    <source>
        <strain>ATCC 204508 / S288c</strain>
    </source>
</reference>
<reference key="2">
    <citation type="journal article" date="2014" name="G3 (Bethesda)">
        <title>The reference genome sequence of Saccharomyces cerevisiae: Then and now.</title>
        <authorList>
            <person name="Engel S.R."/>
            <person name="Dietrich F.S."/>
            <person name="Fisk D.G."/>
            <person name="Binkley G."/>
            <person name="Balakrishnan R."/>
            <person name="Costanzo M.C."/>
            <person name="Dwight S.S."/>
            <person name="Hitz B.C."/>
            <person name="Karra K."/>
            <person name="Nash R.S."/>
            <person name="Weng S."/>
            <person name="Wong E.D."/>
            <person name="Lloyd P."/>
            <person name="Skrzypek M.S."/>
            <person name="Miyasato S.R."/>
            <person name="Simison M."/>
            <person name="Cherry J.M."/>
        </authorList>
    </citation>
    <scope>GENOME REANNOTATION</scope>
    <scope>SEQUENCE REVISION TO 25-26</scope>
    <source>
        <strain>ATCC 204508 / S288c</strain>
    </source>
</reference>
<reference key="3">
    <citation type="journal article" date="2003" name="Nature">
        <title>Global analysis of protein localization in budding yeast.</title>
        <authorList>
            <person name="Huh W.-K."/>
            <person name="Falvo J.V."/>
            <person name="Gerke L.C."/>
            <person name="Carroll A.S."/>
            <person name="Howson R.W."/>
            <person name="Weissman J.S."/>
            <person name="O'Shea E.K."/>
        </authorList>
    </citation>
    <scope>SUBCELLULAR LOCATION [LARGE SCALE ANALYSIS]</scope>
</reference>
<reference key="4">
    <citation type="journal article" date="2003" name="Nature">
        <title>Global analysis of protein expression in yeast.</title>
        <authorList>
            <person name="Ghaemmaghami S."/>
            <person name="Huh W.-K."/>
            <person name="Bower K."/>
            <person name="Howson R.W."/>
            <person name="Belle A."/>
            <person name="Dephoure N."/>
            <person name="O'Shea E.K."/>
            <person name="Weissman J.S."/>
        </authorList>
    </citation>
    <scope>LEVEL OF PROTEIN EXPRESSION [LARGE SCALE ANALYSIS]</scope>
</reference>
<reference key="5">
    <citation type="journal article" date="2008" name="Mol. Cell. Proteomics">
        <title>A multidimensional chromatography technology for in-depth phosphoproteome analysis.</title>
        <authorList>
            <person name="Albuquerque C.P."/>
            <person name="Smolka M.B."/>
            <person name="Payne S.H."/>
            <person name="Bafna V."/>
            <person name="Eng J."/>
            <person name="Zhou H."/>
        </authorList>
    </citation>
    <scope>IDENTIFICATION BY MASS SPECTROMETRY [LARGE SCALE ANALYSIS]</scope>
</reference>
<reference key="6">
    <citation type="journal article" date="2012" name="Proc. Natl. Acad. Sci. U.S.A.">
        <title>N-terminal acetylome analyses and functional insights of the N-terminal acetyltransferase NatB.</title>
        <authorList>
            <person name="Van Damme P."/>
            <person name="Lasa M."/>
            <person name="Polevoda B."/>
            <person name="Gazquez C."/>
            <person name="Elosegui-Artola A."/>
            <person name="Kim D.S."/>
            <person name="De Juan-Pardo E."/>
            <person name="Demeyer K."/>
            <person name="Hole K."/>
            <person name="Larrea E."/>
            <person name="Timmerman E."/>
            <person name="Prieto J."/>
            <person name="Arnesen T."/>
            <person name="Sherman F."/>
            <person name="Gevaert K."/>
            <person name="Aldabe R."/>
        </authorList>
    </citation>
    <scope>IDENTIFICATION BY MASS SPECTROMETRY [LARGE SCALE ANALYSIS]</scope>
</reference>
<organism>
    <name type="scientific">Saccharomyces cerevisiae (strain ATCC 204508 / S288c)</name>
    <name type="common">Baker's yeast</name>
    <dbReference type="NCBI Taxonomy" id="559292"/>
    <lineage>
        <taxon>Eukaryota</taxon>
        <taxon>Fungi</taxon>
        <taxon>Dikarya</taxon>
        <taxon>Ascomycota</taxon>
        <taxon>Saccharomycotina</taxon>
        <taxon>Saccharomycetes</taxon>
        <taxon>Saccharomycetales</taxon>
        <taxon>Saccharomycetaceae</taxon>
        <taxon>Saccharomyces</taxon>
    </lineage>
</organism>
<evidence type="ECO:0000256" key="1">
    <source>
        <dbReference type="SAM" id="MobiDB-lite"/>
    </source>
</evidence>
<evidence type="ECO:0000269" key="2">
    <source>
    </source>
</evidence>
<evidence type="ECO:0000269" key="3">
    <source>
    </source>
</evidence>
<evidence type="ECO:0000305" key="4"/>
<comment type="subcellular location">
    <subcellularLocation>
        <location evidence="2">Cytoplasm</location>
    </subcellularLocation>
</comment>
<comment type="miscellaneous">
    <text evidence="3">Present with 1730 molecules/cell in log phase SD medium.</text>
</comment>
<keyword id="KW-0963">Cytoplasm</keyword>
<keyword id="KW-1185">Reference proteome</keyword>
<accession>P36103</accession>
<accession>D6VXR2</accession>
<name>YKC3_YEAST</name>
<sequence>MNKEELLGFLLDDSIDSQKRCVTDQQAYSNWLKNDNDERTAHEESSSQSTIAALNKKKQTEAAQEDIEELLNGLEGIIGGADPRNLKSKSKRKTKKGGSKPREENVNTEKHIVMLEVEDFSDMSTHEDVNGASPSPNLDRSKKNEKRRKNAKELSYDELKDKLEVTTRKSRLECKDLKKKVHGLERRNLELEQRLEELKIENQTLIEINNKLLKNTNEDEINKSQRNKEKDRKRRERRTARRKDERKQEKKQEKKQDNKTSQSFPSSTDMNGQPIEF</sequence>
<proteinExistence type="evidence at protein level"/>
<gene>
    <name type="ordered locus">YKL023W</name>
</gene>
<feature type="chain" id="PRO_0000203189" description="Uncharacterized protein YKL023W">
    <location>
        <begin position="1"/>
        <end position="277"/>
    </location>
</feature>
<feature type="region of interest" description="Disordered" evidence="1">
    <location>
        <begin position="33"/>
        <end position="168"/>
    </location>
</feature>
<feature type="region of interest" description="Disordered" evidence="1">
    <location>
        <begin position="210"/>
        <end position="277"/>
    </location>
</feature>
<feature type="compositionally biased region" description="Basic and acidic residues" evidence="1">
    <location>
        <begin position="34"/>
        <end position="45"/>
    </location>
</feature>
<feature type="compositionally biased region" description="Basic residues" evidence="1">
    <location>
        <begin position="86"/>
        <end position="99"/>
    </location>
</feature>
<feature type="compositionally biased region" description="Basic and acidic residues" evidence="1">
    <location>
        <begin position="100"/>
        <end position="113"/>
    </location>
</feature>
<feature type="compositionally biased region" description="Basic and acidic residues" evidence="1">
    <location>
        <begin position="151"/>
        <end position="168"/>
    </location>
</feature>
<feature type="compositionally biased region" description="Basic and acidic residues" evidence="1">
    <location>
        <begin position="216"/>
        <end position="230"/>
    </location>
</feature>
<feature type="compositionally biased region" description="Basic residues" evidence="1">
    <location>
        <begin position="231"/>
        <end position="241"/>
    </location>
</feature>
<feature type="compositionally biased region" description="Basic and acidic residues" evidence="1">
    <location>
        <begin position="242"/>
        <end position="258"/>
    </location>
</feature>
<feature type="compositionally biased region" description="Polar residues" evidence="1">
    <location>
        <begin position="259"/>
        <end position="271"/>
    </location>
</feature>
<feature type="sequence conflict" description="In Ref. 1; CAA81858." evidence="4" ref="1">
    <original>QQ</original>
    <variation>HE</variation>
    <location>
        <begin position="25"/>
        <end position="26"/>
    </location>
</feature>
<protein>
    <recommendedName>
        <fullName>Uncharacterized protein YKL023W</fullName>
    </recommendedName>
</protein>